<evidence type="ECO:0000255" key="1">
    <source>
        <dbReference type="HAMAP-Rule" id="MF_00249"/>
    </source>
</evidence>
<evidence type="ECO:0000256" key="2">
    <source>
        <dbReference type="SAM" id="MobiDB-lite"/>
    </source>
</evidence>
<keyword id="KW-0067">ATP-binding</keyword>
<keyword id="KW-0143">Chaperone</keyword>
<keyword id="KW-0963">Cytoplasm</keyword>
<keyword id="KW-0547">Nucleotide-binding</keyword>
<gene>
    <name evidence="1" type="primary">hslU</name>
    <name type="ordered locus">NTHI0625</name>
</gene>
<organism>
    <name type="scientific">Haemophilus influenzae (strain 86-028NP)</name>
    <dbReference type="NCBI Taxonomy" id="281310"/>
    <lineage>
        <taxon>Bacteria</taxon>
        <taxon>Pseudomonadati</taxon>
        <taxon>Pseudomonadota</taxon>
        <taxon>Gammaproteobacteria</taxon>
        <taxon>Pasteurellales</taxon>
        <taxon>Pasteurellaceae</taxon>
        <taxon>Haemophilus</taxon>
    </lineage>
</organism>
<feature type="chain" id="PRO_1000012745" description="ATP-dependent protease ATPase subunit HslU">
    <location>
        <begin position="1"/>
        <end position="444"/>
    </location>
</feature>
<feature type="region of interest" description="Disordered" evidence="2">
    <location>
        <begin position="143"/>
        <end position="163"/>
    </location>
</feature>
<feature type="binding site" evidence="1">
    <location>
        <position position="18"/>
    </location>
    <ligand>
        <name>ATP</name>
        <dbReference type="ChEBI" id="CHEBI:30616"/>
    </ligand>
</feature>
<feature type="binding site" evidence="1">
    <location>
        <begin position="60"/>
        <end position="65"/>
    </location>
    <ligand>
        <name>ATP</name>
        <dbReference type="ChEBI" id="CHEBI:30616"/>
    </ligand>
</feature>
<feature type="binding site" evidence="1">
    <location>
        <position position="257"/>
    </location>
    <ligand>
        <name>ATP</name>
        <dbReference type="ChEBI" id="CHEBI:30616"/>
    </ligand>
</feature>
<feature type="binding site" evidence="1">
    <location>
        <position position="322"/>
    </location>
    <ligand>
        <name>ATP</name>
        <dbReference type="ChEBI" id="CHEBI:30616"/>
    </ligand>
</feature>
<feature type="binding site" evidence="1">
    <location>
        <position position="394"/>
    </location>
    <ligand>
        <name>ATP</name>
        <dbReference type="ChEBI" id="CHEBI:30616"/>
    </ligand>
</feature>
<dbReference type="EMBL" id="CP000057">
    <property type="protein sequence ID" value="AAX87548.1"/>
    <property type="molecule type" value="Genomic_DNA"/>
</dbReference>
<dbReference type="RefSeq" id="WP_005666443.1">
    <property type="nucleotide sequence ID" value="NC_007146.2"/>
</dbReference>
<dbReference type="SMR" id="Q4QN49"/>
<dbReference type="GeneID" id="93219508"/>
<dbReference type="KEGG" id="hit:NTHI0625"/>
<dbReference type="HOGENOM" id="CLU_033123_0_0_6"/>
<dbReference type="Proteomes" id="UP000002525">
    <property type="component" value="Chromosome"/>
</dbReference>
<dbReference type="GO" id="GO:0009376">
    <property type="term" value="C:HslUV protease complex"/>
    <property type="evidence" value="ECO:0007669"/>
    <property type="project" value="UniProtKB-UniRule"/>
</dbReference>
<dbReference type="GO" id="GO:0005524">
    <property type="term" value="F:ATP binding"/>
    <property type="evidence" value="ECO:0007669"/>
    <property type="project" value="UniProtKB-UniRule"/>
</dbReference>
<dbReference type="GO" id="GO:0016887">
    <property type="term" value="F:ATP hydrolysis activity"/>
    <property type="evidence" value="ECO:0007669"/>
    <property type="project" value="InterPro"/>
</dbReference>
<dbReference type="GO" id="GO:0008233">
    <property type="term" value="F:peptidase activity"/>
    <property type="evidence" value="ECO:0007669"/>
    <property type="project" value="InterPro"/>
</dbReference>
<dbReference type="GO" id="GO:0036402">
    <property type="term" value="F:proteasome-activating activity"/>
    <property type="evidence" value="ECO:0007669"/>
    <property type="project" value="UniProtKB-UniRule"/>
</dbReference>
<dbReference type="GO" id="GO:0043335">
    <property type="term" value="P:protein unfolding"/>
    <property type="evidence" value="ECO:0007669"/>
    <property type="project" value="UniProtKB-UniRule"/>
</dbReference>
<dbReference type="GO" id="GO:0051603">
    <property type="term" value="P:proteolysis involved in protein catabolic process"/>
    <property type="evidence" value="ECO:0007669"/>
    <property type="project" value="TreeGrafter"/>
</dbReference>
<dbReference type="CDD" id="cd19498">
    <property type="entry name" value="RecA-like_HslU"/>
    <property type="match status" value="1"/>
</dbReference>
<dbReference type="FunFam" id="1.10.8.10:FF:000028">
    <property type="entry name" value="ATP-dependent protease ATPase subunit HslU"/>
    <property type="match status" value="1"/>
</dbReference>
<dbReference type="FunFam" id="1.10.8.60:FF:000027">
    <property type="entry name" value="ATP-dependent protease ATPase subunit HslU"/>
    <property type="match status" value="1"/>
</dbReference>
<dbReference type="FunFam" id="3.40.50.300:FF:000213">
    <property type="entry name" value="ATP-dependent protease ATPase subunit HslU"/>
    <property type="match status" value="1"/>
</dbReference>
<dbReference type="FunFam" id="3.40.50.300:FF:000220">
    <property type="entry name" value="ATP-dependent protease ATPase subunit HslU"/>
    <property type="match status" value="1"/>
</dbReference>
<dbReference type="Gene3D" id="1.10.8.60">
    <property type="match status" value="1"/>
</dbReference>
<dbReference type="Gene3D" id="3.40.50.300">
    <property type="entry name" value="P-loop containing nucleotide triphosphate hydrolases"/>
    <property type="match status" value="2"/>
</dbReference>
<dbReference type="HAMAP" id="MF_00249">
    <property type="entry name" value="HslU"/>
    <property type="match status" value="1"/>
</dbReference>
<dbReference type="InterPro" id="IPR003593">
    <property type="entry name" value="AAA+_ATPase"/>
</dbReference>
<dbReference type="InterPro" id="IPR050052">
    <property type="entry name" value="ATP-dep_Clp_protease_ClpX"/>
</dbReference>
<dbReference type="InterPro" id="IPR003959">
    <property type="entry name" value="ATPase_AAA_core"/>
</dbReference>
<dbReference type="InterPro" id="IPR019489">
    <property type="entry name" value="Clp_ATPase_C"/>
</dbReference>
<dbReference type="InterPro" id="IPR004491">
    <property type="entry name" value="HslU"/>
</dbReference>
<dbReference type="InterPro" id="IPR027417">
    <property type="entry name" value="P-loop_NTPase"/>
</dbReference>
<dbReference type="NCBIfam" id="TIGR00390">
    <property type="entry name" value="hslU"/>
    <property type="match status" value="1"/>
</dbReference>
<dbReference type="NCBIfam" id="NF003544">
    <property type="entry name" value="PRK05201.1"/>
    <property type="match status" value="1"/>
</dbReference>
<dbReference type="PANTHER" id="PTHR48102">
    <property type="entry name" value="ATP-DEPENDENT CLP PROTEASE ATP-BINDING SUBUNIT CLPX-LIKE, MITOCHONDRIAL-RELATED"/>
    <property type="match status" value="1"/>
</dbReference>
<dbReference type="PANTHER" id="PTHR48102:SF3">
    <property type="entry name" value="ATP-DEPENDENT PROTEASE ATPASE SUBUNIT HSLU"/>
    <property type="match status" value="1"/>
</dbReference>
<dbReference type="Pfam" id="PF00004">
    <property type="entry name" value="AAA"/>
    <property type="match status" value="1"/>
</dbReference>
<dbReference type="Pfam" id="PF07724">
    <property type="entry name" value="AAA_2"/>
    <property type="match status" value="1"/>
</dbReference>
<dbReference type="SMART" id="SM00382">
    <property type="entry name" value="AAA"/>
    <property type="match status" value="1"/>
</dbReference>
<dbReference type="SMART" id="SM01086">
    <property type="entry name" value="ClpB_D2-small"/>
    <property type="match status" value="1"/>
</dbReference>
<dbReference type="SUPFAM" id="SSF52540">
    <property type="entry name" value="P-loop containing nucleoside triphosphate hydrolases"/>
    <property type="match status" value="1"/>
</dbReference>
<name>HSLU_HAEI8</name>
<reference key="1">
    <citation type="journal article" date="2005" name="J. Bacteriol.">
        <title>Genomic sequence of an otitis media isolate of nontypeable Haemophilus influenzae: comparative study with H. influenzae serotype d, strain KW20.</title>
        <authorList>
            <person name="Harrison A."/>
            <person name="Dyer D.W."/>
            <person name="Gillaspy A."/>
            <person name="Ray W.C."/>
            <person name="Mungur R."/>
            <person name="Carson M.B."/>
            <person name="Zhong H."/>
            <person name="Gipson J."/>
            <person name="Gipson M."/>
            <person name="Johnson L.S."/>
            <person name="Lewis L."/>
            <person name="Bakaletz L.O."/>
            <person name="Munson R.S. Jr."/>
        </authorList>
    </citation>
    <scope>NUCLEOTIDE SEQUENCE [LARGE SCALE GENOMIC DNA]</scope>
    <source>
        <strain>86-028NP</strain>
    </source>
</reference>
<comment type="function">
    <text evidence="1">ATPase subunit of a proteasome-like degradation complex; this subunit has chaperone activity. The binding of ATP and its subsequent hydrolysis by HslU are essential for unfolding of protein substrates subsequently hydrolyzed by HslV. HslU recognizes the N-terminal part of its protein substrates and unfolds these before they are guided to HslV for hydrolysis.</text>
</comment>
<comment type="subunit">
    <text evidence="1">A double ring-shaped homohexamer of HslV is capped on each side by a ring-shaped HslU homohexamer. The assembly of the HslU/HslV complex is dependent on binding of ATP.</text>
</comment>
<comment type="subcellular location">
    <subcellularLocation>
        <location evidence="1">Cytoplasm</location>
    </subcellularLocation>
</comment>
<comment type="similarity">
    <text evidence="1">Belongs to the ClpX chaperone family. HslU subfamily.</text>
</comment>
<protein>
    <recommendedName>
        <fullName evidence="1">ATP-dependent protease ATPase subunit HslU</fullName>
    </recommendedName>
    <alternativeName>
        <fullName evidence="1">Unfoldase HslU</fullName>
    </alternativeName>
</protein>
<proteinExistence type="inferred from homology"/>
<accession>Q4QN49</accession>
<sequence length="444" mass="49446">MSEMTPREIVSELDQHIIGQADAKRAVAIALRNRWRRMQLQEPLRHEVTPKNILMIGPTGVGKTEIARRLAKLANAPFIKVEATKFTEVGYVGKEVDSIIRDLTDSAMKLVRQQEIAKNRARAEDAAEERILDALLPPAKNQWGEVENHDSHSSTRQAFRKKLREGQLDDKEIEIDVSAGVSMGVEIMAPPGMEEMTNQLQSLFQNLGSDKTKKRKMKIKDALKTLIDDEAAKLINPEELKQKAIDAVEQNGIVFIDEIDKICKKGEYSGADVSREGVQRDLLPLVEGSTVSTKHGMVKTDHILFIASGAFQVARPSDLIPELQGRLPIRVELTALSAADFERILTEPHASLTEQYKALMATEGVNIEFTTEAVKKIAEAAFRVNEKTENIGARRLHTVMERLMDKISFSASDMNGQTVNIDAAYVADALGEVVENEDLSRFIL</sequence>